<gene>
    <name evidence="1" type="primary">glgA</name>
    <name type="ordered locus">SynWH7803_1026</name>
</gene>
<name>GLGA_SYNPW</name>
<feature type="chain" id="PRO_1000014386" description="Glycogen synthase">
    <location>
        <begin position="1"/>
        <end position="524"/>
    </location>
</feature>
<feature type="region of interest" description="Disordered" evidence="2">
    <location>
        <begin position="463"/>
        <end position="524"/>
    </location>
</feature>
<feature type="compositionally biased region" description="Low complexity" evidence="2">
    <location>
        <begin position="489"/>
        <end position="505"/>
    </location>
</feature>
<feature type="binding site" evidence="1">
    <location>
        <position position="15"/>
    </location>
    <ligand>
        <name>ADP-alpha-D-glucose</name>
        <dbReference type="ChEBI" id="CHEBI:57498"/>
    </ligand>
</feature>
<sequence length="524" mass="58577">MRVLFAAAECAPMVKVGGMGDVVGSLPPALAQLGHDVRLIMPGYGKLWSSLDIPAEPIWRAQTMGTEFAVFETRHPTNGLPLYLVGHPVFDPERIYGGEDEDWRFTFFASAAAEFSWNVWKPQVLHCHDWHTGMIPVWMHQDPEISTVFTIHNLKYQGPWRWKLDRITWCPWYMQGDHTMAAALLYADRVNAVSPTYAQEIRTSEYGEKLEGLLNYISGKLRGILNGIDLEAWNPATDKALPATFSSANLAGKATCKQVLQERMGLTLNPDTFLLGMVSRLVDQKGVDLLLQVADRLLAYTDTQIVVLGTGDRGLESGLWQLASRHPGRVAVFLTYDDALSRLIYAGSDAFLMPSRFEPCGISQLYAMRYGCVPVVRKVGGLVDTVPPHDPRQKSGTGFCFDRFEPVDFYTALVRAWEAFRHPESWKELQRRGMEQDYSWARSALEYDRMYRDVCGLKEPSPDAAAVEQFSQGQEADPSRHGGASQTLSPSEEAPIESSEASSGSTPVRTSRNPLARLLGKQRR</sequence>
<organism>
    <name type="scientific">Synechococcus sp. (strain WH7803)</name>
    <dbReference type="NCBI Taxonomy" id="32051"/>
    <lineage>
        <taxon>Bacteria</taxon>
        <taxon>Bacillati</taxon>
        <taxon>Cyanobacteriota</taxon>
        <taxon>Cyanophyceae</taxon>
        <taxon>Synechococcales</taxon>
        <taxon>Synechococcaceae</taxon>
        <taxon>Synechococcus</taxon>
    </lineage>
</organism>
<evidence type="ECO:0000255" key="1">
    <source>
        <dbReference type="HAMAP-Rule" id="MF_00484"/>
    </source>
</evidence>
<evidence type="ECO:0000256" key="2">
    <source>
        <dbReference type="SAM" id="MobiDB-lite"/>
    </source>
</evidence>
<reference key="1">
    <citation type="submission" date="2006-05" db="EMBL/GenBank/DDBJ databases">
        <authorList>
            <consortium name="Genoscope"/>
        </authorList>
    </citation>
    <scope>NUCLEOTIDE SEQUENCE [LARGE SCALE GENOMIC DNA]</scope>
    <source>
        <strain>WH7803</strain>
    </source>
</reference>
<keyword id="KW-0320">Glycogen biosynthesis</keyword>
<keyword id="KW-0328">Glycosyltransferase</keyword>
<keyword id="KW-1185">Reference proteome</keyword>
<keyword id="KW-0808">Transferase</keyword>
<proteinExistence type="inferred from homology"/>
<dbReference type="EC" id="2.4.1.21" evidence="1"/>
<dbReference type="EMBL" id="CT971583">
    <property type="protein sequence ID" value="CAK23452.1"/>
    <property type="molecule type" value="Genomic_DNA"/>
</dbReference>
<dbReference type="SMR" id="A5GKI7"/>
<dbReference type="STRING" id="32051.SynWH7803_1026"/>
<dbReference type="CAZy" id="GT5">
    <property type="family name" value="Glycosyltransferase Family 5"/>
</dbReference>
<dbReference type="KEGG" id="syx:SynWH7803_1026"/>
<dbReference type="eggNOG" id="COG0297">
    <property type="taxonomic scope" value="Bacteria"/>
</dbReference>
<dbReference type="HOGENOM" id="CLU_009583_18_2_3"/>
<dbReference type="OrthoDB" id="9808590at2"/>
<dbReference type="UniPathway" id="UPA00164"/>
<dbReference type="Proteomes" id="UP000001566">
    <property type="component" value="Chromosome"/>
</dbReference>
<dbReference type="GO" id="GO:0009011">
    <property type="term" value="F:alpha-1,4-glucan glucosyltransferase (ADP-glucose donor) activity"/>
    <property type="evidence" value="ECO:0007669"/>
    <property type="project" value="UniProtKB-UniRule"/>
</dbReference>
<dbReference type="GO" id="GO:0004373">
    <property type="term" value="F:alpha-1,4-glucan glucosyltransferase (UDP-glucose donor) activity"/>
    <property type="evidence" value="ECO:0007669"/>
    <property type="project" value="InterPro"/>
</dbReference>
<dbReference type="GO" id="GO:0005978">
    <property type="term" value="P:glycogen biosynthetic process"/>
    <property type="evidence" value="ECO:0007669"/>
    <property type="project" value="UniProtKB-UniRule"/>
</dbReference>
<dbReference type="CDD" id="cd03791">
    <property type="entry name" value="GT5_Glycogen_synthase_DULL1-like"/>
    <property type="match status" value="1"/>
</dbReference>
<dbReference type="Gene3D" id="3.40.50.2000">
    <property type="entry name" value="Glycogen Phosphorylase B"/>
    <property type="match status" value="2"/>
</dbReference>
<dbReference type="HAMAP" id="MF_00484">
    <property type="entry name" value="Glycogen_synth"/>
    <property type="match status" value="1"/>
</dbReference>
<dbReference type="InterPro" id="IPR001296">
    <property type="entry name" value="Glyco_trans_1"/>
</dbReference>
<dbReference type="InterPro" id="IPR011835">
    <property type="entry name" value="GS/SS"/>
</dbReference>
<dbReference type="InterPro" id="IPR013534">
    <property type="entry name" value="Starch_synth_cat_dom"/>
</dbReference>
<dbReference type="NCBIfam" id="TIGR02095">
    <property type="entry name" value="glgA"/>
    <property type="match status" value="1"/>
</dbReference>
<dbReference type="NCBIfam" id="NF001900">
    <property type="entry name" value="PRK00654.1-3"/>
    <property type="match status" value="1"/>
</dbReference>
<dbReference type="PANTHER" id="PTHR45825:SF11">
    <property type="entry name" value="ALPHA AMYLASE DOMAIN-CONTAINING PROTEIN"/>
    <property type="match status" value="1"/>
</dbReference>
<dbReference type="PANTHER" id="PTHR45825">
    <property type="entry name" value="GRANULE-BOUND STARCH SYNTHASE 1, CHLOROPLASTIC/AMYLOPLASTIC"/>
    <property type="match status" value="1"/>
</dbReference>
<dbReference type="Pfam" id="PF08323">
    <property type="entry name" value="Glyco_transf_5"/>
    <property type="match status" value="1"/>
</dbReference>
<dbReference type="Pfam" id="PF00534">
    <property type="entry name" value="Glycos_transf_1"/>
    <property type="match status" value="1"/>
</dbReference>
<dbReference type="SUPFAM" id="SSF53756">
    <property type="entry name" value="UDP-Glycosyltransferase/glycogen phosphorylase"/>
    <property type="match status" value="1"/>
</dbReference>
<comment type="function">
    <text evidence="1">Synthesizes alpha-1,4-glucan chains using ADP-glucose.</text>
</comment>
<comment type="catalytic activity">
    <reaction evidence="1">
        <text>[(1-&gt;4)-alpha-D-glucosyl](n) + ADP-alpha-D-glucose = [(1-&gt;4)-alpha-D-glucosyl](n+1) + ADP + H(+)</text>
        <dbReference type="Rhea" id="RHEA:18189"/>
        <dbReference type="Rhea" id="RHEA-COMP:9584"/>
        <dbReference type="Rhea" id="RHEA-COMP:9587"/>
        <dbReference type="ChEBI" id="CHEBI:15378"/>
        <dbReference type="ChEBI" id="CHEBI:15444"/>
        <dbReference type="ChEBI" id="CHEBI:57498"/>
        <dbReference type="ChEBI" id="CHEBI:456216"/>
        <dbReference type="EC" id="2.4.1.21"/>
    </reaction>
</comment>
<comment type="pathway">
    <text evidence="1">Glycan biosynthesis; glycogen biosynthesis.</text>
</comment>
<comment type="similarity">
    <text evidence="1">Belongs to the glycosyltransferase 1 family. Bacterial/plant glycogen synthase subfamily.</text>
</comment>
<protein>
    <recommendedName>
        <fullName evidence="1">Glycogen synthase</fullName>
        <ecNumber evidence="1">2.4.1.21</ecNumber>
    </recommendedName>
    <alternativeName>
        <fullName evidence="1">Starch [bacterial glycogen] synthase</fullName>
    </alternativeName>
</protein>
<accession>A5GKI7</accession>